<organism>
    <name type="scientific">Renibacterium salmoninarum (strain ATCC 33209 / DSM 20767 / JCM 11484 / NBRC 15589 / NCIMB 2235)</name>
    <dbReference type="NCBI Taxonomy" id="288705"/>
    <lineage>
        <taxon>Bacteria</taxon>
        <taxon>Bacillati</taxon>
        <taxon>Actinomycetota</taxon>
        <taxon>Actinomycetes</taxon>
        <taxon>Micrococcales</taxon>
        <taxon>Micrococcaceae</taxon>
        <taxon>Renibacterium</taxon>
    </lineage>
</organism>
<gene>
    <name evidence="1" type="primary">uppP</name>
    <name type="ordered locus">RSal33209_2045</name>
</gene>
<dbReference type="EC" id="3.6.1.27" evidence="1"/>
<dbReference type="EMBL" id="CP000910">
    <property type="protein sequence ID" value="ABY23778.1"/>
    <property type="molecule type" value="Genomic_DNA"/>
</dbReference>
<dbReference type="RefSeq" id="WP_012245448.1">
    <property type="nucleotide sequence ID" value="NC_010168.1"/>
</dbReference>
<dbReference type="SMR" id="A9WSJ0"/>
<dbReference type="STRING" id="288705.RSal33209_2045"/>
<dbReference type="KEGG" id="rsa:RSal33209_2045"/>
<dbReference type="eggNOG" id="COG1968">
    <property type="taxonomic scope" value="Bacteria"/>
</dbReference>
<dbReference type="HOGENOM" id="CLU_060296_1_0_11"/>
<dbReference type="Proteomes" id="UP000002007">
    <property type="component" value="Chromosome"/>
</dbReference>
<dbReference type="GO" id="GO:0005886">
    <property type="term" value="C:plasma membrane"/>
    <property type="evidence" value="ECO:0007669"/>
    <property type="project" value="UniProtKB-SubCell"/>
</dbReference>
<dbReference type="GO" id="GO:0050380">
    <property type="term" value="F:undecaprenyl-diphosphatase activity"/>
    <property type="evidence" value="ECO:0007669"/>
    <property type="project" value="UniProtKB-UniRule"/>
</dbReference>
<dbReference type="GO" id="GO:0071555">
    <property type="term" value="P:cell wall organization"/>
    <property type="evidence" value="ECO:0007669"/>
    <property type="project" value="UniProtKB-KW"/>
</dbReference>
<dbReference type="GO" id="GO:0009252">
    <property type="term" value="P:peptidoglycan biosynthetic process"/>
    <property type="evidence" value="ECO:0007669"/>
    <property type="project" value="UniProtKB-KW"/>
</dbReference>
<dbReference type="GO" id="GO:0008360">
    <property type="term" value="P:regulation of cell shape"/>
    <property type="evidence" value="ECO:0007669"/>
    <property type="project" value="UniProtKB-KW"/>
</dbReference>
<dbReference type="GO" id="GO:0046677">
    <property type="term" value="P:response to antibiotic"/>
    <property type="evidence" value="ECO:0007669"/>
    <property type="project" value="UniProtKB-UniRule"/>
</dbReference>
<dbReference type="HAMAP" id="MF_01006">
    <property type="entry name" value="Undec_diphosphatase"/>
    <property type="match status" value="1"/>
</dbReference>
<dbReference type="InterPro" id="IPR003824">
    <property type="entry name" value="UppP"/>
</dbReference>
<dbReference type="NCBIfam" id="NF001392">
    <property type="entry name" value="PRK00281.2-1"/>
    <property type="match status" value="1"/>
</dbReference>
<dbReference type="NCBIfam" id="TIGR00753">
    <property type="entry name" value="undec_PP_bacA"/>
    <property type="match status" value="1"/>
</dbReference>
<dbReference type="PANTHER" id="PTHR30622">
    <property type="entry name" value="UNDECAPRENYL-DIPHOSPHATASE"/>
    <property type="match status" value="1"/>
</dbReference>
<dbReference type="PANTHER" id="PTHR30622:SF4">
    <property type="entry name" value="UNDECAPRENYL-DIPHOSPHATASE"/>
    <property type="match status" value="1"/>
</dbReference>
<dbReference type="Pfam" id="PF02673">
    <property type="entry name" value="BacA"/>
    <property type="match status" value="1"/>
</dbReference>
<keyword id="KW-0046">Antibiotic resistance</keyword>
<keyword id="KW-1003">Cell membrane</keyword>
<keyword id="KW-0133">Cell shape</keyword>
<keyword id="KW-0961">Cell wall biogenesis/degradation</keyword>
<keyword id="KW-0378">Hydrolase</keyword>
<keyword id="KW-0472">Membrane</keyword>
<keyword id="KW-0573">Peptidoglycan synthesis</keyword>
<keyword id="KW-1185">Reference proteome</keyword>
<keyword id="KW-0812">Transmembrane</keyword>
<keyword id="KW-1133">Transmembrane helix</keyword>
<evidence type="ECO:0000255" key="1">
    <source>
        <dbReference type="HAMAP-Rule" id="MF_01006"/>
    </source>
</evidence>
<sequence length="280" mass="30219">MEWIQAAILGIVQGLTEFLPISSSAHIFIVGKLMGLGDPGAAFTAVSQLGTEAAVIVFFWRDIVRIIKHWGLSIAGKIPRNDPDARMGWLVVAGSIPIIVVGLFFQNAIEVTFRNLWIVATTLIVFGVILAVADAVGKHERKLEELTVKHGILYGLAQCLALIPGVSRSGGTITAGLLMGYTREAAARYSFLLAIPAVLGSGFYELFKIVAKHENAGDTFNLGQTALATVIAFVVGYLIIGWFLKFISHNSYRGFVWYRIALGLVVFVLLGFGVIPATLS</sequence>
<comment type="function">
    <text evidence="1">Catalyzes the dephosphorylation of undecaprenyl diphosphate (UPP). Confers resistance to bacitracin.</text>
</comment>
<comment type="catalytic activity">
    <reaction evidence="1">
        <text>di-trans,octa-cis-undecaprenyl diphosphate + H2O = di-trans,octa-cis-undecaprenyl phosphate + phosphate + H(+)</text>
        <dbReference type="Rhea" id="RHEA:28094"/>
        <dbReference type="ChEBI" id="CHEBI:15377"/>
        <dbReference type="ChEBI" id="CHEBI:15378"/>
        <dbReference type="ChEBI" id="CHEBI:43474"/>
        <dbReference type="ChEBI" id="CHEBI:58405"/>
        <dbReference type="ChEBI" id="CHEBI:60392"/>
        <dbReference type="EC" id="3.6.1.27"/>
    </reaction>
</comment>
<comment type="subcellular location">
    <subcellularLocation>
        <location evidence="1">Cell membrane</location>
        <topology evidence="1">Multi-pass membrane protein</topology>
    </subcellularLocation>
</comment>
<comment type="miscellaneous">
    <text>Bacitracin is thought to be involved in the inhibition of peptidoglycan synthesis by sequestering undecaprenyl diphosphate, thereby reducing the pool of lipid carrier available.</text>
</comment>
<comment type="similarity">
    <text evidence="1">Belongs to the UppP family.</text>
</comment>
<name>UPPP_RENSM</name>
<reference key="1">
    <citation type="journal article" date="2008" name="J. Bacteriol.">
        <title>Genome sequence of the fish pathogen Renibacterium salmoninarum suggests reductive evolution away from an environmental Arthrobacter ancestor.</title>
        <authorList>
            <person name="Wiens G.D."/>
            <person name="Rockey D.D."/>
            <person name="Wu Z."/>
            <person name="Chang J."/>
            <person name="Levy R."/>
            <person name="Crane S."/>
            <person name="Chen D.S."/>
            <person name="Capri G.R."/>
            <person name="Burnett J.R."/>
            <person name="Sudheesh P.S."/>
            <person name="Schipma M.J."/>
            <person name="Burd H."/>
            <person name="Bhattacharyya A."/>
            <person name="Rhodes L.D."/>
            <person name="Kaul R."/>
            <person name="Strom M.S."/>
        </authorList>
    </citation>
    <scope>NUCLEOTIDE SEQUENCE [LARGE SCALE GENOMIC DNA]</scope>
    <source>
        <strain>ATCC 33209 / DSM 20767 / JCM 11484 / NBRC 15589 / NCIMB 2235</strain>
    </source>
</reference>
<feature type="chain" id="PRO_1000197394" description="Undecaprenyl-diphosphatase">
    <location>
        <begin position="1"/>
        <end position="280"/>
    </location>
</feature>
<feature type="transmembrane region" description="Helical" evidence="1">
    <location>
        <begin position="1"/>
        <end position="21"/>
    </location>
</feature>
<feature type="transmembrane region" description="Helical" evidence="1">
    <location>
        <begin position="40"/>
        <end position="60"/>
    </location>
</feature>
<feature type="transmembrane region" description="Helical" evidence="1">
    <location>
        <begin position="89"/>
        <end position="109"/>
    </location>
</feature>
<feature type="transmembrane region" description="Helical" evidence="1">
    <location>
        <begin position="116"/>
        <end position="136"/>
    </location>
</feature>
<feature type="transmembrane region" description="Helical" evidence="1">
    <location>
        <begin position="146"/>
        <end position="166"/>
    </location>
</feature>
<feature type="transmembrane region" description="Helical" evidence="1">
    <location>
        <begin position="191"/>
        <end position="211"/>
    </location>
</feature>
<feature type="transmembrane region" description="Helical" evidence="1">
    <location>
        <begin position="227"/>
        <end position="247"/>
    </location>
</feature>
<feature type="transmembrane region" description="Helical" evidence="1">
    <location>
        <begin position="260"/>
        <end position="280"/>
    </location>
</feature>
<protein>
    <recommendedName>
        <fullName evidence="1">Undecaprenyl-diphosphatase</fullName>
        <ecNumber evidence="1">3.6.1.27</ecNumber>
    </recommendedName>
    <alternativeName>
        <fullName evidence="1">Bacitracin resistance protein</fullName>
    </alternativeName>
    <alternativeName>
        <fullName evidence="1">Undecaprenyl pyrophosphate phosphatase</fullName>
    </alternativeName>
</protein>
<proteinExistence type="inferred from homology"/>
<accession>A9WSJ0</accession>